<keyword id="KW-0143">Chaperone</keyword>
<keyword id="KW-0963">Cytoplasm</keyword>
<keyword id="KW-0235">DNA replication</keyword>
<keyword id="KW-0479">Metal-binding</keyword>
<keyword id="KW-0677">Repeat</keyword>
<keyword id="KW-0346">Stress response</keyword>
<keyword id="KW-0862">Zinc</keyword>
<keyword id="KW-0863">Zinc-finger</keyword>
<evidence type="ECO:0000255" key="1">
    <source>
        <dbReference type="HAMAP-Rule" id="MF_01152"/>
    </source>
</evidence>
<accession>P0DA71</accession>
<accession>Q879J5</accession>
<accession>Q8K625</accession>
<proteinExistence type="inferred from homology"/>
<organism>
    <name type="scientific">Streptococcus pyogenes serotype M3 (strain SSI-1)</name>
    <dbReference type="NCBI Taxonomy" id="193567"/>
    <lineage>
        <taxon>Bacteria</taxon>
        <taxon>Bacillati</taxon>
        <taxon>Bacillota</taxon>
        <taxon>Bacilli</taxon>
        <taxon>Lactobacillales</taxon>
        <taxon>Streptococcaceae</taxon>
        <taxon>Streptococcus</taxon>
    </lineage>
</organism>
<feature type="chain" id="PRO_0000411323" description="Chaperone protein DnaJ">
    <location>
        <begin position="1"/>
        <end position="378"/>
    </location>
</feature>
<feature type="domain" description="J" evidence="1">
    <location>
        <begin position="5"/>
        <end position="69"/>
    </location>
</feature>
<feature type="repeat" description="CXXCXGXG motif">
    <location>
        <begin position="147"/>
        <end position="154"/>
    </location>
</feature>
<feature type="repeat" description="CXXCXGXG motif">
    <location>
        <begin position="164"/>
        <end position="171"/>
    </location>
</feature>
<feature type="repeat" description="CXXCXGXG motif">
    <location>
        <begin position="190"/>
        <end position="197"/>
    </location>
</feature>
<feature type="repeat" description="CXXCXGXG motif">
    <location>
        <begin position="204"/>
        <end position="211"/>
    </location>
</feature>
<feature type="zinc finger region" description="CR-type" evidence="1">
    <location>
        <begin position="134"/>
        <end position="216"/>
    </location>
</feature>
<feature type="binding site" evidence="1">
    <location>
        <position position="147"/>
    </location>
    <ligand>
        <name>Zn(2+)</name>
        <dbReference type="ChEBI" id="CHEBI:29105"/>
        <label>1</label>
    </ligand>
</feature>
<feature type="binding site" evidence="1">
    <location>
        <position position="150"/>
    </location>
    <ligand>
        <name>Zn(2+)</name>
        <dbReference type="ChEBI" id="CHEBI:29105"/>
        <label>1</label>
    </ligand>
</feature>
<feature type="binding site" evidence="1">
    <location>
        <position position="164"/>
    </location>
    <ligand>
        <name>Zn(2+)</name>
        <dbReference type="ChEBI" id="CHEBI:29105"/>
        <label>2</label>
    </ligand>
</feature>
<feature type="binding site" evidence="1">
    <location>
        <position position="167"/>
    </location>
    <ligand>
        <name>Zn(2+)</name>
        <dbReference type="ChEBI" id="CHEBI:29105"/>
        <label>2</label>
    </ligand>
</feature>
<feature type="binding site" evidence="1">
    <location>
        <position position="190"/>
    </location>
    <ligand>
        <name>Zn(2+)</name>
        <dbReference type="ChEBI" id="CHEBI:29105"/>
        <label>2</label>
    </ligand>
</feature>
<feature type="binding site" evidence="1">
    <location>
        <position position="193"/>
    </location>
    <ligand>
        <name>Zn(2+)</name>
        <dbReference type="ChEBI" id="CHEBI:29105"/>
        <label>2</label>
    </ligand>
</feature>
<feature type="binding site" evidence="1">
    <location>
        <position position="204"/>
    </location>
    <ligand>
        <name>Zn(2+)</name>
        <dbReference type="ChEBI" id="CHEBI:29105"/>
        <label>1</label>
    </ligand>
</feature>
<feature type="binding site" evidence="1">
    <location>
        <position position="207"/>
    </location>
    <ligand>
        <name>Zn(2+)</name>
        <dbReference type="ChEBI" id="CHEBI:29105"/>
        <label>1</label>
    </ligand>
</feature>
<dbReference type="EMBL" id="BA000034">
    <property type="protein sequence ID" value="BAC63431.1"/>
    <property type="molecule type" value="Genomic_DNA"/>
</dbReference>
<dbReference type="RefSeq" id="WP_002993772.1">
    <property type="nucleotide sequence ID" value="NC_004606.1"/>
</dbReference>
<dbReference type="SMR" id="P0DA71"/>
<dbReference type="GeneID" id="69900395"/>
<dbReference type="KEGG" id="sps:SPs0336"/>
<dbReference type="HOGENOM" id="CLU_017633_0_7_9"/>
<dbReference type="GO" id="GO:0005737">
    <property type="term" value="C:cytoplasm"/>
    <property type="evidence" value="ECO:0007669"/>
    <property type="project" value="UniProtKB-SubCell"/>
</dbReference>
<dbReference type="GO" id="GO:0005524">
    <property type="term" value="F:ATP binding"/>
    <property type="evidence" value="ECO:0007669"/>
    <property type="project" value="InterPro"/>
</dbReference>
<dbReference type="GO" id="GO:0031072">
    <property type="term" value="F:heat shock protein binding"/>
    <property type="evidence" value="ECO:0007669"/>
    <property type="project" value="InterPro"/>
</dbReference>
<dbReference type="GO" id="GO:0051082">
    <property type="term" value="F:unfolded protein binding"/>
    <property type="evidence" value="ECO:0007669"/>
    <property type="project" value="UniProtKB-UniRule"/>
</dbReference>
<dbReference type="GO" id="GO:0008270">
    <property type="term" value="F:zinc ion binding"/>
    <property type="evidence" value="ECO:0007669"/>
    <property type="project" value="UniProtKB-UniRule"/>
</dbReference>
<dbReference type="GO" id="GO:0051085">
    <property type="term" value="P:chaperone cofactor-dependent protein refolding"/>
    <property type="evidence" value="ECO:0007669"/>
    <property type="project" value="TreeGrafter"/>
</dbReference>
<dbReference type="GO" id="GO:0006260">
    <property type="term" value="P:DNA replication"/>
    <property type="evidence" value="ECO:0007669"/>
    <property type="project" value="UniProtKB-KW"/>
</dbReference>
<dbReference type="GO" id="GO:0042026">
    <property type="term" value="P:protein refolding"/>
    <property type="evidence" value="ECO:0007669"/>
    <property type="project" value="TreeGrafter"/>
</dbReference>
<dbReference type="GO" id="GO:0009408">
    <property type="term" value="P:response to heat"/>
    <property type="evidence" value="ECO:0007669"/>
    <property type="project" value="InterPro"/>
</dbReference>
<dbReference type="CDD" id="cd06257">
    <property type="entry name" value="DnaJ"/>
    <property type="match status" value="1"/>
</dbReference>
<dbReference type="CDD" id="cd10747">
    <property type="entry name" value="DnaJ_C"/>
    <property type="match status" value="1"/>
</dbReference>
<dbReference type="CDD" id="cd10719">
    <property type="entry name" value="DnaJ_zf"/>
    <property type="match status" value="1"/>
</dbReference>
<dbReference type="FunFam" id="1.10.287.110:FF:000031">
    <property type="entry name" value="Molecular chaperone DnaJ"/>
    <property type="match status" value="1"/>
</dbReference>
<dbReference type="FunFam" id="2.10.230.10:FF:000002">
    <property type="entry name" value="Molecular chaperone DnaJ"/>
    <property type="match status" value="1"/>
</dbReference>
<dbReference type="FunFam" id="2.60.260.20:FF:000004">
    <property type="entry name" value="Molecular chaperone DnaJ"/>
    <property type="match status" value="1"/>
</dbReference>
<dbReference type="Gene3D" id="1.10.287.110">
    <property type="entry name" value="DnaJ domain"/>
    <property type="match status" value="1"/>
</dbReference>
<dbReference type="Gene3D" id="2.10.230.10">
    <property type="entry name" value="Heat shock protein DnaJ, cysteine-rich domain"/>
    <property type="match status" value="1"/>
</dbReference>
<dbReference type="Gene3D" id="2.60.260.20">
    <property type="entry name" value="Urease metallochaperone UreE, N-terminal domain"/>
    <property type="match status" value="2"/>
</dbReference>
<dbReference type="HAMAP" id="MF_01152">
    <property type="entry name" value="DnaJ"/>
    <property type="match status" value="1"/>
</dbReference>
<dbReference type="InterPro" id="IPR012724">
    <property type="entry name" value="DnaJ"/>
</dbReference>
<dbReference type="InterPro" id="IPR002939">
    <property type="entry name" value="DnaJ_C"/>
</dbReference>
<dbReference type="InterPro" id="IPR001623">
    <property type="entry name" value="DnaJ_domain"/>
</dbReference>
<dbReference type="InterPro" id="IPR018253">
    <property type="entry name" value="DnaJ_domain_CS"/>
</dbReference>
<dbReference type="InterPro" id="IPR008971">
    <property type="entry name" value="HSP40/DnaJ_pept-bd"/>
</dbReference>
<dbReference type="InterPro" id="IPR001305">
    <property type="entry name" value="HSP_DnaJ_Cys-rich_dom"/>
</dbReference>
<dbReference type="InterPro" id="IPR036410">
    <property type="entry name" value="HSP_DnaJ_Cys-rich_dom_sf"/>
</dbReference>
<dbReference type="InterPro" id="IPR036869">
    <property type="entry name" value="J_dom_sf"/>
</dbReference>
<dbReference type="NCBIfam" id="TIGR02349">
    <property type="entry name" value="DnaJ_bact"/>
    <property type="match status" value="1"/>
</dbReference>
<dbReference type="NCBIfam" id="NF008035">
    <property type="entry name" value="PRK10767.1"/>
    <property type="match status" value="1"/>
</dbReference>
<dbReference type="NCBIfam" id="NF010869">
    <property type="entry name" value="PRK14276.1"/>
    <property type="match status" value="1"/>
</dbReference>
<dbReference type="PANTHER" id="PTHR43096:SF48">
    <property type="entry name" value="CHAPERONE PROTEIN DNAJ"/>
    <property type="match status" value="1"/>
</dbReference>
<dbReference type="PANTHER" id="PTHR43096">
    <property type="entry name" value="DNAJ HOMOLOG 1, MITOCHONDRIAL-RELATED"/>
    <property type="match status" value="1"/>
</dbReference>
<dbReference type="Pfam" id="PF00226">
    <property type="entry name" value="DnaJ"/>
    <property type="match status" value="1"/>
</dbReference>
<dbReference type="Pfam" id="PF01556">
    <property type="entry name" value="DnaJ_C"/>
    <property type="match status" value="1"/>
</dbReference>
<dbReference type="Pfam" id="PF00684">
    <property type="entry name" value="DnaJ_CXXCXGXG"/>
    <property type="match status" value="1"/>
</dbReference>
<dbReference type="PRINTS" id="PR00625">
    <property type="entry name" value="JDOMAIN"/>
</dbReference>
<dbReference type="SMART" id="SM00271">
    <property type="entry name" value="DnaJ"/>
    <property type="match status" value="1"/>
</dbReference>
<dbReference type="SUPFAM" id="SSF46565">
    <property type="entry name" value="Chaperone J-domain"/>
    <property type="match status" value="1"/>
</dbReference>
<dbReference type="SUPFAM" id="SSF57938">
    <property type="entry name" value="DnaJ/Hsp40 cysteine-rich domain"/>
    <property type="match status" value="1"/>
</dbReference>
<dbReference type="SUPFAM" id="SSF49493">
    <property type="entry name" value="HSP40/DnaJ peptide-binding domain"/>
    <property type="match status" value="2"/>
</dbReference>
<dbReference type="PROSITE" id="PS00636">
    <property type="entry name" value="DNAJ_1"/>
    <property type="match status" value="1"/>
</dbReference>
<dbReference type="PROSITE" id="PS50076">
    <property type="entry name" value="DNAJ_2"/>
    <property type="match status" value="1"/>
</dbReference>
<dbReference type="PROSITE" id="PS51188">
    <property type="entry name" value="ZF_CR"/>
    <property type="match status" value="1"/>
</dbReference>
<name>DNAJ_STRPQ</name>
<gene>
    <name evidence="1" type="primary">dnaJ</name>
    <name type="ordered locus">SPs0336</name>
</gene>
<reference key="1">
    <citation type="journal article" date="2003" name="Genome Res.">
        <title>Genome sequence of an M3 strain of Streptococcus pyogenes reveals a large-scale genomic rearrangement in invasive strains and new insights into phage evolution.</title>
        <authorList>
            <person name="Nakagawa I."/>
            <person name="Kurokawa K."/>
            <person name="Yamashita A."/>
            <person name="Nakata M."/>
            <person name="Tomiyasu Y."/>
            <person name="Okahashi N."/>
            <person name="Kawabata S."/>
            <person name="Yamazaki K."/>
            <person name="Shiba T."/>
            <person name="Yasunaga T."/>
            <person name="Hayashi H."/>
            <person name="Hattori M."/>
            <person name="Hamada S."/>
        </authorList>
    </citation>
    <scope>NUCLEOTIDE SEQUENCE [LARGE SCALE GENOMIC DNA]</scope>
    <source>
        <strain>SSI-1</strain>
    </source>
</reference>
<comment type="function">
    <text evidence="1">Participates actively in the response to hyperosmotic and heat shock by preventing the aggregation of stress-denatured proteins and by disaggregating proteins, also in an autonomous, DnaK-independent fashion. Unfolded proteins bind initially to DnaJ; upon interaction with the DnaJ-bound protein, DnaK hydrolyzes its bound ATP, resulting in the formation of a stable complex. GrpE releases ADP from DnaK; ATP binding to DnaK triggers the release of the substrate protein, thus completing the reaction cycle. Several rounds of ATP-dependent interactions between DnaJ, DnaK and GrpE are required for fully efficient folding. Also involved, together with DnaK and GrpE, in the DNA replication of plasmids through activation of initiation proteins.</text>
</comment>
<comment type="cofactor">
    <cofactor evidence="1">
        <name>Zn(2+)</name>
        <dbReference type="ChEBI" id="CHEBI:29105"/>
    </cofactor>
    <text evidence="1">Binds 2 Zn(2+) ions per monomer.</text>
</comment>
<comment type="subunit">
    <text evidence="1">Homodimer.</text>
</comment>
<comment type="subcellular location">
    <subcellularLocation>
        <location evidence="1">Cytoplasm</location>
    </subcellularLocation>
</comment>
<comment type="domain">
    <text evidence="1">The J domain is necessary and sufficient to stimulate DnaK ATPase activity. Zinc center 1 plays an important role in the autonomous, DnaK-independent chaperone activity of DnaJ. Zinc center 2 is essential for interaction with DnaK and for DnaJ activity.</text>
</comment>
<comment type="similarity">
    <text evidence="1">Belongs to the DnaJ family.</text>
</comment>
<sequence>MNNTEYYDRLGVSKDASQDDIKKAYRKMSKKYHPDINKEAGAEQKYKDVQEAYETLSDSQKRAAYDQYGAAGAQGGFGGGAGGFGGFDGGGFGGFEDIFSSFFGGGGSRNPNAPRQGDDLQYRVNLSFEEAVFGVEKEVSYNREATCGTCLGSGAKPGTAPVTCRKCHGSGVMTIDTQTPLGMMRRQVTCDICHGSGKEIKEPCQTCHGTGHEKQAHKVSVKIPAGVETGQQIRLQGQGEAGFNGGPYGDLFVILNVLPSKQFERNGSTIYYNLDISFTQAALGDTVEIPTVHGDVEMAIPAGTQTGKTFRLKGKGAPKLRGGGQGDQHVTVNIVTPTKLNDAQREALQAFAEASGEKMLHPKKKGFFDKVKDALEDI</sequence>
<protein>
    <recommendedName>
        <fullName evidence="1">Chaperone protein DnaJ</fullName>
    </recommendedName>
</protein>